<accession>B2S6P1</accession>
<dbReference type="EC" id="2.1.1.-" evidence="1"/>
<dbReference type="EMBL" id="CP000887">
    <property type="protein sequence ID" value="ACD72838.1"/>
    <property type="molecule type" value="Genomic_DNA"/>
</dbReference>
<dbReference type="RefSeq" id="WP_002966890.1">
    <property type="nucleotide sequence ID" value="NC_010742.1"/>
</dbReference>
<dbReference type="SMR" id="B2S6P1"/>
<dbReference type="KEGG" id="bmc:BAbS19_I13430"/>
<dbReference type="HOGENOM" id="CLU_049382_3_0_5"/>
<dbReference type="Proteomes" id="UP000002565">
    <property type="component" value="Chromosome 1"/>
</dbReference>
<dbReference type="GO" id="GO:0005737">
    <property type="term" value="C:cytoplasm"/>
    <property type="evidence" value="ECO:0007669"/>
    <property type="project" value="UniProtKB-SubCell"/>
</dbReference>
<dbReference type="GO" id="GO:0016279">
    <property type="term" value="F:protein-lysine N-methyltransferase activity"/>
    <property type="evidence" value="ECO:0007669"/>
    <property type="project" value="RHEA"/>
</dbReference>
<dbReference type="GO" id="GO:0032259">
    <property type="term" value="P:methylation"/>
    <property type="evidence" value="ECO:0007669"/>
    <property type="project" value="UniProtKB-KW"/>
</dbReference>
<dbReference type="CDD" id="cd02440">
    <property type="entry name" value="AdoMet_MTases"/>
    <property type="match status" value="1"/>
</dbReference>
<dbReference type="Gene3D" id="3.40.50.150">
    <property type="entry name" value="Vaccinia Virus protein VP39"/>
    <property type="match status" value="1"/>
</dbReference>
<dbReference type="HAMAP" id="MF_00735">
    <property type="entry name" value="Methyltr_PrmA"/>
    <property type="match status" value="1"/>
</dbReference>
<dbReference type="InterPro" id="IPR050078">
    <property type="entry name" value="Ribosomal_L11_MeTrfase_PrmA"/>
</dbReference>
<dbReference type="InterPro" id="IPR004498">
    <property type="entry name" value="Ribosomal_PrmA_MeTrfase"/>
</dbReference>
<dbReference type="InterPro" id="IPR029063">
    <property type="entry name" value="SAM-dependent_MTases_sf"/>
</dbReference>
<dbReference type="NCBIfam" id="NF001784">
    <property type="entry name" value="PRK00517.2-1"/>
    <property type="match status" value="1"/>
</dbReference>
<dbReference type="PANTHER" id="PTHR43648">
    <property type="entry name" value="ELECTRON TRANSFER FLAVOPROTEIN BETA SUBUNIT LYSINE METHYLTRANSFERASE"/>
    <property type="match status" value="1"/>
</dbReference>
<dbReference type="PANTHER" id="PTHR43648:SF1">
    <property type="entry name" value="ELECTRON TRANSFER FLAVOPROTEIN BETA SUBUNIT LYSINE METHYLTRANSFERASE"/>
    <property type="match status" value="1"/>
</dbReference>
<dbReference type="Pfam" id="PF06325">
    <property type="entry name" value="PrmA"/>
    <property type="match status" value="1"/>
</dbReference>
<dbReference type="PIRSF" id="PIRSF000401">
    <property type="entry name" value="RPL11_MTase"/>
    <property type="match status" value="1"/>
</dbReference>
<dbReference type="SUPFAM" id="SSF53335">
    <property type="entry name" value="S-adenosyl-L-methionine-dependent methyltransferases"/>
    <property type="match status" value="1"/>
</dbReference>
<gene>
    <name evidence="1" type="primary">prmA</name>
    <name type="ordered locus">BAbS19_I13430</name>
</gene>
<keyword id="KW-0963">Cytoplasm</keyword>
<keyword id="KW-0489">Methyltransferase</keyword>
<keyword id="KW-0949">S-adenosyl-L-methionine</keyword>
<keyword id="KW-0808">Transferase</keyword>
<organism>
    <name type="scientific">Brucella abortus (strain S19)</name>
    <dbReference type="NCBI Taxonomy" id="430066"/>
    <lineage>
        <taxon>Bacteria</taxon>
        <taxon>Pseudomonadati</taxon>
        <taxon>Pseudomonadota</taxon>
        <taxon>Alphaproteobacteria</taxon>
        <taxon>Hyphomicrobiales</taxon>
        <taxon>Brucellaceae</taxon>
        <taxon>Brucella/Ochrobactrum group</taxon>
        <taxon>Brucella</taxon>
    </lineage>
</organism>
<feature type="chain" id="PRO_1000192587" description="Ribosomal protein L11 methyltransferase">
    <location>
        <begin position="1"/>
        <end position="285"/>
    </location>
</feature>
<feature type="binding site" evidence="1">
    <location>
        <position position="131"/>
    </location>
    <ligand>
        <name>S-adenosyl-L-methionine</name>
        <dbReference type="ChEBI" id="CHEBI:59789"/>
    </ligand>
</feature>
<feature type="binding site" evidence="1">
    <location>
        <position position="154"/>
    </location>
    <ligand>
        <name>S-adenosyl-L-methionine</name>
        <dbReference type="ChEBI" id="CHEBI:59789"/>
    </ligand>
</feature>
<feature type="binding site" evidence="1">
    <location>
        <position position="176"/>
    </location>
    <ligand>
        <name>S-adenosyl-L-methionine</name>
        <dbReference type="ChEBI" id="CHEBI:59789"/>
    </ligand>
</feature>
<feature type="binding site" evidence="1">
    <location>
        <position position="223"/>
    </location>
    <ligand>
        <name>S-adenosyl-L-methionine</name>
        <dbReference type="ChEBI" id="CHEBI:59789"/>
    </ligand>
</feature>
<protein>
    <recommendedName>
        <fullName evidence="1">Ribosomal protein L11 methyltransferase</fullName>
        <shortName evidence="1">L11 Mtase</shortName>
        <ecNumber evidence="1">2.1.1.-</ecNumber>
    </recommendedName>
</protein>
<reference key="1">
    <citation type="journal article" date="2008" name="PLoS ONE">
        <title>Genome sequence of Brucella abortus vaccine strain S19 compared to virulent strains yields candidate virulence genes.</title>
        <authorList>
            <person name="Crasta O.R."/>
            <person name="Folkerts O."/>
            <person name="Fei Z."/>
            <person name="Mane S.P."/>
            <person name="Evans C."/>
            <person name="Martino-Catt S."/>
            <person name="Bricker B."/>
            <person name="Yu G."/>
            <person name="Du L."/>
            <person name="Sobral B.W."/>
        </authorList>
    </citation>
    <scope>NUCLEOTIDE SEQUENCE [LARGE SCALE GENOMIC DNA]</scope>
    <source>
        <strain>S19</strain>
    </source>
</reference>
<evidence type="ECO:0000255" key="1">
    <source>
        <dbReference type="HAMAP-Rule" id="MF_00735"/>
    </source>
</evidence>
<comment type="function">
    <text evidence="1">Methylates ribosomal protein L11.</text>
</comment>
<comment type="catalytic activity">
    <reaction evidence="1">
        <text>L-lysyl-[protein] + 3 S-adenosyl-L-methionine = N(6),N(6),N(6)-trimethyl-L-lysyl-[protein] + 3 S-adenosyl-L-homocysteine + 3 H(+)</text>
        <dbReference type="Rhea" id="RHEA:54192"/>
        <dbReference type="Rhea" id="RHEA-COMP:9752"/>
        <dbReference type="Rhea" id="RHEA-COMP:13826"/>
        <dbReference type="ChEBI" id="CHEBI:15378"/>
        <dbReference type="ChEBI" id="CHEBI:29969"/>
        <dbReference type="ChEBI" id="CHEBI:57856"/>
        <dbReference type="ChEBI" id="CHEBI:59789"/>
        <dbReference type="ChEBI" id="CHEBI:61961"/>
    </reaction>
</comment>
<comment type="subcellular location">
    <subcellularLocation>
        <location evidence="1">Cytoplasm</location>
    </subcellularLocation>
</comment>
<comment type="similarity">
    <text evidence="1">Belongs to the methyltransferase superfamily. PrmA family.</text>
</comment>
<proteinExistence type="inferred from homology"/>
<name>PRMA_BRUA1</name>
<sequence>MAQSRLFFSADKAEAERTYNILEQAFEDDGFPIAITEIDEDRQIFEVSVYVEDDAEEVAARVDALVGPGLFDTEELPDIDWVTHSLEGLKPVRAGHFFVHGSHDRDKIEPGDIAIEIDAGLAFGTGHHGTTAGCLELIEETVETEHPTNALDLGTGSAVLAIAIARLAPIPILATDIDPIAVTVAAENAAKNGVAEHIVTATAEGFGHPIFRSYSPFDLIVANILANPLIELAPSIKEHLAPGGSIILSGILDSQHDAVLAAYQTQGLTHQKTLHREGWVAIHLT</sequence>